<reference key="1">
    <citation type="journal article" date="2010" name="J. Bacteriol.">
        <title>Complete genome sequence of Methanothermobacter marburgensis, a methanoarchaeon model organism.</title>
        <authorList>
            <person name="Liesegang H."/>
            <person name="Kaster A.K."/>
            <person name="Wiezer A."/>
            <person name="Goenrich M."/>
            <person name="Wollherr A."/>
            <person name="Seedorf H."/>
            <person name="Gottschalk G."/>
            <person name="Thauer R.K."/>
        </authorList>
    </citation>
    <scope>NUCLEOTIDE SEQUENCE [LARGE SCALE GENOMIC DNA]</scope>
    <source>
        <strain>ATCC BAA-927 / DSM 2133 / JCM 14651 / NBRC 100331 / OCM 82 / Marburg</strain>
    </source>
</reference>
<reference key="2">
    <citation type="journal article" date="1997" name="Eur. J. Biochem.">
        <title>Structures and functions of four anabolic 2-oxoacid oxidoreductases in Methanobacterium thermoautotrophicum.</title>
        <authorList>
            <person name="Tersteegen A."/>
            <person name="Linder D."/>
            <person name="Thauer R.K."/>
            <person name="Hedderich R."/>
        </authorList>
    </citation>
    <scope>PROTEIN SEQUENCE OF 1-21</scope>
    <scope>BIOPHYSICOCHEMICAL PROPERTIES</scope>
    <scope>SUBUNIT</scope>
    <source>
        <strain>ATCC BAA-927 / DSM 2133 / JCM 14651 / NBRC 100331 / OCM 82 / Marburg</strain>
    </source>
</reference>
<accession>P80905</accession>
<accession>D9PXQ5</accession>
<protein>
    <recommendedName>
        <fullName>2-oxoglutarate synthase subunit KorB</fullName>
        <ecNumber>1.2.7.3</ecNumber>
    </recommendedName>
    <alternativeName>
        <fullName>2-ketoglutarate oxidoreductase beta chain</fullName>
        <shortName>KOR</shortName>
    </alternativeName>
    <alternativeName>
        <fullName>2-oxoglutarate-ferredoxin oxidoreductase subunit beta</fullName>
    </alternativeName>
</protein>
<comment type="catalytic activity">
    <reaction>
        <text>2 oxidized [2Fe-2S]-[ferredoxin] + 2-oxoglutarate + CoA = succinyl-CoA + 2 reduced [2Fe-2S]-[ferredoxin] + CO2 + H(+)</text>
        <dbReference type="Rhea" id="RHEA:17297"/>
        <dbReference type="Rhea" id="RHEA-COMP:10000"/>
        <dbReference type="Rhea" id="RHEA-COMP:10001"/>
        <dbReference type="ChEBI" id="CHEBI:15378"/>
        <dbReference type="ChEBI" id="CHEBI:16526"/>
        <dbReference type="ChEBI" id="CHEBI:16810"/>
        <dbReference type="ChEBI" id="CHEBI:33737"/>
        <dbReference type="ChEBI" id="CHEBI:33738"/>
        <dbReference type="ChEBI" id="CHEBI:57287"/>
        <dbReference type="ChEBI" id="CHEBI:57292"/>
        <dbReference type="EC" id="1.2.7.3"/>
    </reaction>
</comment>
<comment type="biophysicochemical properties">
    <phDependence>
        <text evidence="1">Optimum pH is 9.</text>
    </phDependence>
    <temperatureDependence>
        <text evidence="1">Optimum temperature is 70 degrees Celsius.</text>
    </temperatureDependence>
</comment>
<comment type="subunit">
    <text evidence="1">Heterotetramer of the KorA, KorB, KorC and KorD subunits.</text>
</comment>
<dbReference type="EC" id="1.2.7.3"/>
<dbReference type="EMBL" id="CP001710">
    <property type="protein sequence ID" value="ADL59003.1"/>
    <property type="molecule type" value="Genomic_DNA"/>
</dbReference>
<dbReference type="RefSeq" id="WP_013296215.1">
    <property type="nucleotide sequence ID" value="NC_014408.1"/>
</dbReference>
<dbReference type="SMR" id="P80905"/>
<dbReference type="STRING" id="79929.MTBMA_c14160"/>
<dbReference type="PaxDb" id="79929-MTBMA_c14160"/>
<dbReference type="GeneID" id="43707859"/>
<dbReference type="GeneID" id="9705125"/>
<dbReference type="KEGG" id="mmg:MTBMA_c14160"/>
<dbReference type="PATRIC" id="fig|79929.8.peg.1380"/>
<dbReference type="HOGENOM" id="CLU_048564_2_0_2"/>
<dbReference type="OrthoDB" id="30755at2157"/>
<dbReference type="Proteomes" id="UP000000345">
    <property type="component" value="Chromosome"/>
</dbReference>
<dbReference type="GO" id="GO:0047553">
    <property type="term" value="F:2-oxoglutarate synthase activity"/>
    <property type="evidence" value="ECO:0007669"/>
    <property type="project" value="UniProtKB-EC"/>
</dbReference>
<dbReference type="GO" id="GO:0030976">
    <property type="term" value="F:thiamine pyrophosphate binding"/>
    <property type="evidence" value="ECO:0007669"/>
    <property type="project" value="InterPro"/>
</dbReference>
<dbReference type="GO" id="GO:0006082">
    <property type="term" value="P:organic acid metabolic process"/>
    <property type="evidence" value="ECO:0007669"/>
    <property type="project" value="UniProtKB-ARBA"/>
</dbReference>
<dbReference type="GO" id="GO:0044272">
    <property type="term" value="P:sulfur compound biosynthetic process"/>
    <property type="evidence" value="ECO:0007669"/>
    <property type="project" value="UniProtKB-ARBA"/>
</dbReference>
<dbReference type="CDD" id="cd03375">
    <property type="entry name" value="TPP_OGFOR"/>
    <property type="match status" value="1"/>
</dbReference>
<dbReference type="Gene3D" id="3.40.50.970">
    <property type="match status" value="1"/>
</dbReference>
<dbReference type="InterPro" id="IPR051457">
    <property type="entry name" value="2-oxoacid:Fd_oxidoreductase"/>
</dbReference>
<dbReference type="InterPro" id="IPR029061">
    <property type="entry name" value="THDP-binding"/>
</dbReference>
<dbReference type="InterPro" id="IPR011766">
    <property type="entry name" value="TPP_enzyme_TPP-bd"/>
</dbReference>
<dbReference type="PANTHER" id="PTHR48084">
    <property type="entry name" value="2-OXOGLUTARATE OXIDOREDUCTASE SUBUNIT KORB-RELATED"/>
    <property type="match status" value="1"/>
</dbReference>
<dbReference type="PANTHER" id="PTHR48084:SF1">
    <property type="entry name" value="2-OXOGLUTARATE SYNTHASE SUBUNIT KORB"/>
    <property type="match status" value="1"/>
</dbReference>
<dbReference type="Pfam" id="PF02775">
    <property type="entry name" value="TPP_enzyme_C"/>
    <property type="match status" value="1"/>
</dbReference>
<dbReference type="SUPFAM" id="SSF52518">
    <property type="entry name" value="Thiamin diphosphate-binding fold (THDP-binding)"/>
    <property type="match status" value="1"/>
</dbReference>
<sequence length="285" mass="31121">MNVKENPYLKYLRRDRLPHIFCAGCGNGIVLNTFFKGMEMAGVDFDSIAMVSGIGCSSRIPGYVKCDSLHTTHGRPIAFATGLKLANPSLNVVVFTGDGDAAAIGGNHLIHGARKNIDLTVICINNSIYGMTGGQISPTSPEGSFGTTAPYGALEDPFDLSELVRAAGASYVARWTAAHPLQLANSIKKGLKNRGFSFIEAVSQCPTYFGRKNRMRSPVEMMKFMKENSINRRKALKMDPEEVEGKLIIGEFADAPRPELCDRIYGMIEEKSGKIDIIKSAYRDD</sequence>
<evidence type="ECO:0000269" key="1">
    <source>
    </source>
</evidence>
<feature type="chain" id="PRO_0000099944" description="2-oxoglutarate synthase subunit KorB">
    <location>
        <begin position="1"/>
        <end position="285"/>
    </location>
</feature>
<organism>
    <name type="scientific">Methanothermobacter marburgensis (strain ATCC BAA-927 / DSM 2133 / JCM 14651 / NBRC 100331 / OCM 82 / Marburg)</name>
    <name type="common">Methanobacterium thermoautotrophicum</name>
    <dbReference type="NCBI Taxonomy" id="79929"/>
    <lineage>
        <taxon>Archaea</taxon>
        <taxon>Methanobacteriati</taxon>
        <taxon>Methanobacteriota</taxon>
        <taxon>Methanomada group</taxon>
        <taxon>Methanobacteria</taxon>
        <taxon>Methanobacteriales</taxon>
        <taxon>Methanobacteriaceae</taxon>
        <taxon>Methanothermobacter</taxon>
    </lineage>
</organism>
<keyword id="KW-0903">Direct protein sequencing</keyword>
<keyword id="KW-0560">Oxidoreductase</keyword>
<proteinExistence type="evidence at protein level"/>
<gene>
    <name type="primary">korB</name>
    <name type="ordered locus">MTBMA_c14160</name>
</gene>
<name>KORB_METTM</name>